<sequence>MTNATTLTDLTIAEARDAMAKGAFTPLELTNAHLARMEAGRGLNAFITETPDLARMQAERSGERLRAGKAGPMEGIPIGIKDLFCTEGVRTTAGSKILDGFVPPYESTVSANLAKAGAVMLGKTNLDEFAMGSSNKTSASGPVINPWTRTDDDEQLVPGGSSGGSAAAVAGRLAMAATGTDTGGSIRQPAAFCGLVGLKPTYGRCSRWGVVAFASSLDQAGPMTRTVRDAAIMLKAMAGHDPMDGTSAPVEVPNFEAVLSGDIRGLRVGLPRQYRPEGLDPEIAALWDRGAEMLKDAGATLVEVDLPHTKYALATYYIVAPAEASSNLARYDGVRYGLRVPGETLDEMYCKTRAAGFGEEVRRRVLIGTYALSAGYYDAYYLKAQKVRALIAQDFKTAFETVDVLLTPTTPSAAFGLNETIDDPITMYLNDVFTVPTSLAGLPGLSVPVGLSSRGLPLGLQLVGRYFDEETVLNAGLALERASAFTQKPAFLTGALEGQI</sequence>
<reference key="1">
    <citation type="journal article" date="2011" name="Stand. Genomic Sci.">
        <title>Complete genome sequence of Rhodospirillum rubrum type strain (S1).</title>
        <authorList>
            <person name="Munk A.C."/>
            <person name="Copeland A."/>
            <person name="Lucas S."/>
            <person name="Lapidus A."/>
            <person name="Del Rio T.G."/>
            <person name="Barry K."/>
            <person name="Detter J.C."/>
            <person name="Hammon N."/>
            <person name="Israni S."/>
            <person name="Pitluck S."/>
            <person name="Brettin T."/>
            <person name="Bruce D."/>
            <person name="Han C."/>
            <person name="Tapia R."/>
            <person name="Gilna P."/>
            <person name="Schmutz J."/>
            <person name="Larimer F."/>
            <person name="Land M."/>
            <person name="Kyrpides N.C."/>
            <person name="Mavromatis K."/>
            <person name="Richardson P."/>
            <person name="Rohde M."/>
            <person name="Goeker M."/>
            <person name="Klenk H.P."/>
            <person name="Zhang Y."/>
            <person name="Roberts G.P."/>
            <person name="Reslewic S."/>
            <person name="Schwartz D.C."/>
        </authorList>
    </citation>
    <scope>NUCLEOTIDE SEQUENCE [LARGE SCALE GENOMIC DNA]</scope>
    <source>
        <strain>ATCC 11170 / ATH 1.1.1 / DSM 467 / LMG 4362 / NCIMB 8255 / S1</strain>
    </source>
</reference>
<organism>
    <name type="scientific">Rhodospirillum rubrum (strain ATCC 11170 / ATH 1.1.1 / DSM 467 / LMG 4362 / NCIMB 8255 / S1)</name>
    <dbReference type="NCBI Taxonomy" id="269796"/>
    <lineage>
        <taxon>Bacteria</taxon>
        <taxon>Pseudomonadati</taxon>
        <taxon>Pseudomonadota</taxon>
        <taxon>Alphaproteobacteria</taxon>
        <taxon>Rhodospirillales</taxon>
        <taxon>Rhodospirillaceae</taxon>
        <taxon>Rhodospirillum</taxon>
    </lineage>
</organism>
<accession>Q2RPH4</accession>
<protein>
    <recommendedName>
        <fullName evidence="1">Glutamyl-tRNA(Gln) amidotransferase subunit A</fullName>
        <shortName evidence="1">Glu-ADT subunit A</shortName>
        <ecNumber evidence="1">6.3.5.7</ecNumber>
    </recommendedName>
</protein>
<comment type="function">
    <text evidence="1">Allows the formation of correctly charged Gln-tRNA(Gln) through the transamidation of misacylated Glu-tRNA(Gln) in organisms which lack glutaminyl-tRNA synthetase. The reaction takes place in the presence of glutamine and ATP through an activated gamma-phospho-Glu-tRNA(Gln).</text>
</comment>
<comment type="catalytic activity">
    <reaction evidence="1">
        <text>L-glutamyl-tRNA(Gln) + L-glutamine + ATP + H2O = L-glutaminyl-tRNA(Gln) + L-glutamate + ADP + phosphate + H(+)</text>
        <dbReference type="Rhea" id="RHEA:17521"/>
        <dbReference type="Rhea" id="RHEA-COMP:9681"/>
        <dbReference type="Rhea" id="RHEA-COMP:9684"/>
        <dbReference type="ChEBI" id="CHEBI:15377"/>
        <dbReference type="ChEBI" id="CHEBI:15378"/>
        <dbReference type="ChEBI" id="CHEBI:29985"/>
        <dbReference type="ChEBI" id="CHEBI:30616"/>
        <dbReference type="ChEBI" id="CHEBI:43474"/>
        <dbReference type="ChEBI" id="CHEBI:58359"/>
        <dbReference type="ChEBI" id="CHEBI:78520"/>
        <dbReference type="ChEBI" id="CHEBI:78521"/>
        <dbReference type="ChEBI" id="CHEBI:456216"/>
        <dbReference type="EC" id="6.3.5.7"/>
    </reaction>
</comment>
<comment type="subunit">
    <text evidence="1">Heterotrimer of A, B and C subunits.</text>
</comment>
<comment type="similarity">
    <text evidence="1">Belongs to the amidase family. GatA subfamily.</text>
</comment>
<proteinExistence type="inferred from homology"/>
<dbReference type="EC" id="6.3.5.7" evidence="1"/>
<dbReference type="EMBL" id="CP000230">
    <property type="protein sequence ID" value="ABC23971.1"/>
    <property type="molecule type" value="Genomic_DNA"/>
</dbReference>
<dbReference type="RefSeq" id="WP_011390924.1">
    <property type="nucleotide sequence ID" value="NC_007643.1"/>
</dbReference>
<dbReference type="RefSeq" id="YP_428258.1">
    <property type="nucleotide sequence ID" value="NC_007643.1"/>
</dbReference>
<dbReference type="SMR" id="Q2RPH4"/>
<dbReference type="STRING" id="269796.Rru_A3176"/>
<dbReference type="EnsemblBacteria" id="ABC23971">
    <property type="protein sequence ID" value="ABC23971"/>
    <property type="gene ID" value="Rru_A3176"/>
</dbReference>
<dbReference type="KEGG" id="rru:Rru_A3176"/>
<dbReference type="PATRIC" id="fig|269796.9.peg.3289"/>
<dbReference type="eggNOG" id="COG0154">
    <property type="taxonomic scope" value="Bacteria"/>
</dbReference>
<dbReference type="HOGENOM" id="CLU_009600_0_3_5"/>
<dbReference type="PhylomeDB" id="Q2RPH4"/>
<dbReference type="Proteomes" id="UP000001929">
    <property type="component" value="Chromosome"/>
</dbReference>
<dbReference type="GO" id="GO:0030956">
    <property type="term" value="C:glutamyl-tRNA(Gln) amidotransferase complex"/>
    <property type="evidence" value="ECO:0007669"/>
    <property type="project" value="InterPro"/>
</dbReference>
<dbReference type="GO" id="GO:0005524">
    <property type="term" value="F:ATP binding"/>
    <property type="evidence" value="ECO:0007669"/>
    <property type="project" value="UniProtKB-KW"/>
</dbReference>
<dbReference type="GO" id="GO:0050567">
    <property type="term" value="F:glutaminyl-tRNA synthase (glutamine-hydrolyzing) activity"/>
    <property type="evidence" value="ECO:0007669"/>
    <property type="project" value="UniProtKB-UniRule"/>
</dbReference>
<dbReference type="GO" id="GO:0006412">
    <property type="term" value="P:translation"/>
    <property type="evidence" value="ECO:0007669"/>
    <property type="project" value="UniProtKB-UniRule"/>
</dbReference>
<dbReference type="Gene3D" id="3.90.1300.10">
    <property type="entry name" value="Amidase signature (AS) domain"/>
    <property type="match status" value="1"/>
</dbReference>
<dbReference type="HAMAP" id="MF_00120">
    <property type="entry name" value="GatA"/>
    <property type="match status" value="1"/>
</dbReference>
<dbReference type="InterPro" id="IPR000120">
    <property type="entry name" value="Amidase"/>
</dbReference>
<dbReference type="InterPro" id="IPR020556">
    <property type="entry name" value="Amidase_CS"/>
</dbReference>
<dbReference type="InterPro" id="IPR023631">
    <property type="entry name" value="Amidase_dom"/>
</dbReference>
<dbReference type="InterPro" id="IPR036928">
    <property type="entry name" value="AS_sf"/>
</dbReference>
<dbReference type="InterPro" id="IPR004412">
    <property type="entry name" value="GatA"/>
</dbReference>
<dbReference type="NCBIfam" id="TIGR00132">
    <property type="entry name" value="gatA"/>
    <property type="match status" value="1"/>
</dbReference>
<dbReference type="PANTHER" id="PTHR11895:SF151">
    <property type="entry name" value="GLUTAMYL-TRNA(GLN) AMIDOTRANSFERASE SUBUNIT A"/>
    <property type="match status" value="1"/>
</dbReference>
<dbReference type="PANTHER" id="PTHR11895">
    <property type="entry name" value="TRANSAMIDASE"/>
    <property type="match status" value="1"/>
</dbReference>
<dbReference type="Pfam" id="PF01425">
    <property type="entry name" value="Amidase"/>
    <property type="match status" value="1"/>
</dbReference>
<dbReference type="SUPFAM" id="SSF75304">
    <property type="entry name" value="Amidase signature (AS) enzymes"/>
    <property type="match status" value="1"/>
</dbReference>
<dbReference type="PROSITE" id="PS00571">
    <property type="entry name" value="AMIDASES"/>
    <property type="match status" value="1"/>
</dbReference>
<feature type="chain" id="PRO_0000241146" description="Glutamyl-tRNA(Gln) amidotransferase subunit A">
    <location>
        <begin position="1"/>
        <end position="500"/>
    </location>
</feature>
<feature type="active site" description="Charge relay system" evidence="1">
    <location>
        <position position="81"/>
    </location>
</feature>
<feature type="active site" description="Charge relay system" evidence="1">
    <location>
        <position position="161"/>
    </location>
</feature>
<feature type="active site" description="Acyl-ester intermediate" evidence="1">
    <location>
        <position position="185"/>
    </location>
</feature>
<name>GATA_RHORT</name>
<gene>
    <name evidence="1" type="primary">gatA</name>
    <name type="ordered locus">Rru_A3176</name>
</gene>
<keyword id="KW-0067">ATP-binding</keyword>
<keyword id="KW-0436">Ligase</keyword>
<keyword id="KW-0547">Nucleotide-binding</keyword>
<keyword id="KW-0648">Protein biosynthesis</keyword>
<keyword id="KW-1185">Reference proteome</keyword>
<evidence type="ECO:0000255" key="1">
    <source>
        <dbReference type="HAMAP-Rule" id="MF_00120"/>
    </source>
</evidence>